<name>VM2BI_BITGA</name>
<protein>
    <recommendedName>
        <fullName>Zinc metalloproteinase/disintegrin</fullName>
    </recommendedName>
    <component>
        <recommendedName>
            <fullName>Snake venom metalloproteinase-4</fullName>
            <shortName>SVMP</shortName>
            <ecNumber>3.4.24.-</ecNumber>
        </recommendedName>
    </component>
    <component>
        <recommendedName>
            <fullName evidence="6">Disintegrin bitisgabonin</fullName>
        </recommendedName>
        <alternativeName>
            <fullName evidence="6">Bitisgabonin-1</fullName>
        </alternativeName>
        <alternativeName>
            <fullName evidence="6">Bitisgabonin-2</fullName>
        </alternativeName>
    </component>
</protein>
<sequence length="325" mass="36670">KYENVEKGDEAPKKCGVTHTNLESDEPIEKASQLFGTSEQQRFDPRHIELVIVADHGMVMKHNGDLTAVRTWLHQIGNNLNVMFADLNIRITMAGLEMWSEKDLIDIQSAASETLRLFGEWRERYLLNRRMHDNAQLLTTVNLDGDTVGLAYVGGMCDPKNSVGIVQDHSRIAREVAATMAHELGHNLGMAHDGNQCNCGANGCVMSEEIIERTSYQFSDCSKEEYRTFLDNHNPQRILNEPLRTDTVSTPVYGNVLQNSPHPCCDPVTCKPKAWEHCISGPCCRDCKFLRPGTVCRVARGDWNDDFCTGRSSECESNPWNFWNH</sequence>
<accession>Q6T271</accession>
<proteinExistence type="evidence at protein level"/>
<feature type="propeptide" id="PRO_0000336067" evidence="1">
    <location>
        <begin position="1" status="less than"/>
        <end position="39"/>
    </location>
</feature>
<feature type="chain" id="PRO_0000336068" description="Snake venom metalloproteinase-4" evidence="1">
    <location>
        <begin position="40"/>
        <end position="242"/>
    </location>
</feature>
<feature type="propeptide" id="PRO_0000336069" evidence="1">
    <location>
        <begin position="243"/>
        <end position="257"/>
    </location>
</feature>
<feature type="chain" id="PRO_0000336070" description="Disintegrin bitisgabonin" evidence="5">
    <location>
        <begin position="258"/>
        <end position="325"/>
    </location>
</feature>
<feature type="domain" description="Peptidase M12B" evidence="4">
    <location>
        <begin position="46"/>
        <end position="242"/>
    </location>
</feature>
<feature type="domain" description="Disintegrin" evidence="3">
    <location>
        <begin position="250"/>
        <end position="322"/>
    </location>
</feature>
<feature type="short sequence motif" description="Cell attachment site">
    <location>
        <begin position="300"/>
        <end position="302"/>
    </location>
</feature>
<feature type="active site" evidence="4">
    <location>
        <position position="183"/>
    </location>
</feature>
<feature type="binding site" evidence="1">
    <location>
        <position position="182"/>
    </location>
    <ligand>
        <name>Zn(2+)</name>
        <dbReference type="ChEBI" id="CHEBI:29105"/>
        <note>catalytic</note>
    </ligand>
</feature>
<feature type="binding site" evidence="1">
    <location>
        <position position="186"/>
    </location>
    <ligand>
        <name>Zn(2+)</name>
        <dbReference type="ChEBI" id="CHEBI:29105"/>
        <note>catalytic</note>
    </ligand>
</feature>
<feature type="binding site" evidence="1">
    <location>
        <position position="192"/>
    </location>
    <ligand>
        <name>Zn(2+)</name>
        <dbReference type="ChEBI" id="CHEBI:29105"/>
        <note>catalytic</note>
    </ligand>
</feature>
<feature type="modified residue" description="Pyrrolidone carboxylic acid" evidence="1">
    <location>
        <position position="40"/>
    </location>
</feature>
<feature type="modified residue" description="Pyrrolidone carboxylic acid" evidence="5">
    <location>
        <position position="258"/>
    </location>
</feature>
<feature type="disulfide bond" evidence="4">
    <location>
        <begin position="197"/>
        <end position="221"/>
    </location>
</feature>
<feature type="disulfide bond" evidence="4">
    <location>
        <begin position="199"/>
        <end position="204"/>
    </location>
</feature>
<feature type="disulfide bond" evidence="2">
    <location>
        <begin position="264"/>
        <end position="287"/>
    </location>
</feature>
<feature type="disulfide bond" description="Interchain (with C-54 in gabonin-1/2)" evidence="2">
    <location>
        <position position="265"/>
    </location>
</feature>
<feature type="disulfide bond" description="Interchain (with C-59 in gabonin-1/2)" evidence="2">
    <location>
        <position position="270"/>
    </location>
</feature>
<feature type="disulfide bond" evidence="2">
    <location>
        <begin position="278"/>
        <end position="284"/>
    </location>
</feature>
<feature type="disulfide bond" evidence="2">
    <location>
        <begin position="283"/>
        <end position="308"/>
    </location>
</feature>
<feature type="disulfide bond" evidence="2 3">
    <location>
        <begin position="296"/>
        <end position="315"/>
    </location>
</feature>
<feature type="non-terminal residue" evidence="7">
    <location>
        <position position="1"/>
    </location>
</feature>
<dbReference type="EC" id="3.4.24.-"/>
<dbReference type="EMBL" id="AY442287">
    <property type="protein sequence ID" value="AAR19273.1"/>
    <property type="molecule type" value="mRNA"/>
</dbReference>
<dbReference type="SMR" id="Q6T271"/>
<dbReference type="MEROPS" id="M12.164"/>
<dbReference type="GO" id="GO:0005576">
    <property type="term" value="C:extracellular region"/>
    <property type="evidence" value="ECO:0007669"/>
    <property type="project" value="UniProtKB-SubCell"/>
</dbReference>
<dbReference type="GO" id="GO:0046872">
    <property type="term" value="F:metal ion binding"/>
    <property type="evidence" value="ECO:0007669"/>
    <property type="project" value="UniProtKB-KW"/>
</dbReference>
<dbReference type="GO" id="GO:0004222">
    <property type="term" value="F:metalloendopeptidase activity"/>
    <property type="evidence" value="ECO:0007669"/>
    <property type="project" value="InterPro"/>
</dbReference>
<dbReference type="GO" id="GO:0090729">
    <property type="term" value="F:toxin activity"/>
    <property type="evidence" value="ECO:0007669"/>
    <property type="project" value="UniProtKB-KW"/>
</dbReference>
<dbReference type="GO" id="GO:0006508">
    <property type="term" value="P:proteolysis"/>
    <property type="evidence" value="ECO:0007669"/>
    <property type="project" value="UniProtKB-KW"/>
</dbReference>
<dbReference type="CDD" id="cd04269">
    <property type="entry name" value="ZnMc_adamalysin_II_like"/>
    <property type="match status" value="1"/>
</dbReference>
<dbReference type="FunFam" id="3.40.390.10:FF:000002">
    <property type="entry name" value="Disintegrin and metalloproteinase domain-containing protein 22"/>
    <property type="match status" value="1"/>
</dbReference>
<dbReference type="Gene3D" id="3.40.390.10">
    <property type="entry name" value="Collagenase (Catalytic Domain)"/>
    <property type="match status" value="1"/>
</dbReference>
<dbReference type="Gene3D" id="4.10.70.10">
    <property type="entry name" value="Disintegrin domain"/>
    <property type="match status" value="1"/>
</dbReference>
<dbReference type="InterPro" id="IPR018358">
    <property type="entry name" value="Disintegrin_CS"/>
</dbReference>
<dbReference type="InterPro" id="IPR001762">
    <property type="entry name" value="Disintegrin_dom"/>
</dbReference>
<dbReference type="InterPro" id="IPR036436">
    <property type="entry name" value="Disintegrin_dom_sf"/>
</dbReference>
<dbReference type="InterPro" id="IPR024079">
    <property type="entry name" value="MetalloPept_cat_dom_sf"/>
</dbReference>
<dbReference type="InterPro" id="IPR001590">
    <property type="entry name" value="Peptidase_M12B"/>
</dbReference>
<dbReference type="InterPro" id="IPR034027">
    <property type="entry name" value="Reprolysin_adamalysin"/>
</dbReference>
<dbReference type="PANTHER" id="PTHR11905">
    <property type="entry name" value="ADAM A DISINTEGRIN AND METALLOPROTEASE DOMAIN"/>
    <property type="match status" value="1"/>
</dbReference>
<dbReference type="PANTHER" id="PTHR11905:SF159">
    <property type="entry name" value="ADAM METALLOPROTEASE"/>
    <property type="match status" value="1"/>
</dbReference>
<dbReference type="Pfam" id="PF00200">
    <property type="entry name" value="Disintegrin"/>
    <property type="match status" value="1"/>
</dbReference>
<dbReference type="Pfam" id="PF01421">
    <property type="entry name" value="Reprolysin"/>
    <property type="match status" value="1"/>
</dbReference>
<dbReference type="PRINTS" id="PR00289">
    <property type="entry name" value="DISINTEGRIN"/>
</dbReference>
<dbReference type="SMART" id="SM00050">
    <property type="entry name" value="DISIN"/>
    <property type="match status" value="1"/>
</dbReference>
<dbReference type="SUPFAM" id="SSF57552">
    <property type="entry name" value="Blood coagulation inhibitor (disintegrin)"/>
    <property type="match status" value="1"/>
</dbReference>
<dbReference type="SUPFAM" id="SSF55486">
    <property type="entry name" value="Metalloproteases ('zincins'), catalytic domain"/>
    <property type="match status" value="1"/>
</dbReference>
<dbReference type="PROSITE" id="PS50215">
    <property type="entry name" value="ADAM_MEPRO"/>
    <property type="match status" value="1"/>
</dbReference>
<dbReference type="PROSITE" id="PS00427">
    <property type="entry name" value="DISINTEGRIN_1"/>
    <property type="match status" value="1"/>
</dbReference>
<dbReference type="PROSITE" id="PS50214">
    <property type="entry name" value="DISINTEGRIN_2"/>
    <property type="match status" value="1"/>
</dbReference>
<dbReference type="PROSITE" id="PS00142">
    <property type="entry name" value="ZINC_PROTEASE"/>
    <property type="match status" value="1"/>
</dbReference>
<evidence type="ECO:0000250" key="1"/>
<evidence type="ECO:0000250" key="2">
    <source>
        <dbReference type="UniProtKB" id="Q805F6"/>
    </source>
</evidence>
<evidence type="ECO:0000255" key="3">
    <source>
        <dbReference type="PROSITE-ProRule" id="PRU00068"/>
    </source>
</evidence>
<evidence type="ECO:0000255" key="4">
    <source>
        <dbReference type="PROSITE-ProRule" id="PRU00276"/>
    </source>
</evidence>
<evidence type="ECO:0000269" key="5">
    <source>
    </source>
</evidence>
<evidence type="ECO:0000303" key="6">
    <source>
    </source>
</evidence>
<evidence type="ECO:0000305" key="7"/>
<organism>
    <name type="scientific">Bitis gabonica</name>
    <name type="common">Gaboon adder</name>
    <name type="synonym">Gaboon viper</name>
    <dbReference type="NCBI Taxonomy" id="8694"/>
    <lineage>
        <taxon>Eukaryota</taxon>
        <taxon>Metazoa</taxon>
        <taxon>Chordata</taxon>
        <taxon>Craniata</taxon>
        <taxon>Vertebrata</taxon>
        <taxon>Euteleostomi</taxon>
        <taxon>Lepidosauria</taxon>
        <taxon>Squamata</taxon>
        <taxon>Bifurcata</taxon>
        <taxon>Unidentata</taxon>
        <taxon>Episquamata</taxon>
        <taxon>Toxicofera</taxon>
        <taxon>Serpentes</taxon>
        <taxon>Colubroidea</taxon>
        <taxon>Viperidae</taxon>
        <taxon>Viperinae</taxon>
        <taxon>Bitis</taxon>
    </lineage>
</organism>
<keyword id="KW-1217">Cell adhesion impairing toxin</keyword>
<keyword id="KW-0903">Direct protein sequencing</keyword>
<keyword id="KW-1015">Disulfide bond</keyword>
<keyword id="KW-1199">Hemostasis impairing toxin</keyword>
<keyword id="KW-0378">Hydrolase</keyword>
<keyword id="KW-0479">Metal-binding</keyword>
<keyword id="KW-0482">Metalloprotease</keyword>
<keyword id="KW-0645">Protease</keyword>
<keyword id="KW-0873">Pyrrolidone carboxylic acid</keyword>
<keyword id="KW-0964">Secreted</keyword>
<keyword id="KW-0800">Toxin</keyword>
<keyword id="KW-0862">Zinc</keyword>
<keyword id="KW-0865">Zymogen</keyword>
<reference key="1">
    <citation type="journal article" date="2004" name="Gene">
        <title>Bitis gabonica (Gaboon viper) snake venom gland: toward a catalog for the full-length transcripts (cDNA) and proteins.</title>
        <authorList>
            <person name="Francischetti I.M.B."/>
            <person name="My-Pham V."/>
            <person name="Harrison J."/>
            <person name="Garfield M.K."/>
            <person name="Ribeiro J.M.C."/>
        </authorList>
    </citation>
    <scope>NUCLEOTIDE SEQUENCE [LARGE SCALE MRNA]</scope>
    <source>
        <tissue>Venom gland</tissue>
    </source>
</reference>
<reference key="2">
    <citation type="journal article" date="2007" name="J. Proteome Res.">
        <title>Snake venomics of Bitis gabonica gabonica. Protein family composition, subunit organization of venom toxins, and characterization of dimeric disintegrins bitisgabonin-1 and bitisgabonin-2.</title>
        <authorList>
            <person name="Calvete J.J."/>
            <person name="Marcinkiewicz C."/>
            <person name="Sanz L."/>
        </authorList>
    </citation>
    <scope>PROTEIN SEQUENCE OF 258-325</scope>
    <scope>FUNCTION</scope>
    <scope>SUBCELLULAR LOCATION</scope>
    <scope>TISSUE SPECIFICITY</scope>
    <scope>IDENTIFICATION BY MASS SPECTROMETRY</scope>
    <scope>PYROGLUTAMATE FORMATION AT GLN-258</scope>
    <source>
        <tissue>Venom</tissue>
    </source>
</reference>
<comment type="function">
    <molecule>Snake venom metalloproteinase-4</molecule>
    <text evidence="1">Impairs hemostasis in the envenomed animal.</text>
</comment>
<comment type="function">
    <molecule>Disintegrin bitisgabonin</molecule>
    <text evidence="5">In dimer with gabonin-1 (bitisgabonin-1), is a potent inhibitor of the adhesion of the RGD-dependent integrin alpha-5/beta-1 (ITGA5/ITGB1) to immobilized fibronectin.</text>
</comment>
<comment type="function">
    <molecule>Disintegrin bitisgabonin</molecule>
    <text evidence="5">In dimer with gabonin-2 (bitisgabonin-2), preferentially inhibits the adhesion of the alpha-4/beta-1 (ITGA4/ITGB1) and alpha-9/beta-1 (ITGA9/ITGB1) integrins to VCAM-1 and also acts as a strong antagonist of alpha-5/beta-1 (ITGA5/ITGB1).</text>
</comment>
<comment type="cofactor">
    <cofactor evidence="1">
        <name>Zn(2+)</name>
        <dbReference type="ChEBI" id="CHEBI:29105"/>
    </cofactor>
    <text evidence="1">Binds 1 zinc ion per subunit.</text>
</comment>
<comment type="subunit">
    <text>Heterodimer of bitisgabonin and gabonin-1 (bitisgabonin-1) or gabonin-2 (bitisgabonin-2); disulfide-linked.</text>
</comment>
<comment type="subcellular location">
    <subcellularLocation>
        <location evidence="5">Secreted</location>
    </subcellularLocation>
</comment>
<comment type="tissue specificity">
    <text evidence="5">Expressed by the venom gland.</text>
</comment>
<comment type="miscellaneous">
    <text>The disintegrin belongs to the dimeric disintegrin subfamily.</text>
</comment>
<comment type="similarity">
    <text evidence="7">Belongs to the venom metalloproteinase (M12B) family. P-II subfamily. P-IIe sub-subfamily.</text>
</comment>